<organism>
    <name type="scientific">Bos taurus</name>
    <name type="common">Bovine</name>
    <dbReference type="NCBI Taxonomy" id="9913"/>
    <lineage>
        <taxon>Eukaryota</taxon>
        <taxon>Metazoa</taxon>
        <taxon>Chordata</taxon>
        <taxon>Craniata</taxon>
        <taxon>Vertebrata</taxon>
        <taxon>Euteleostomi</taxon>
        <taxon>Mammalia</taxon>
        <taxon>Eutheria</taxon>
        <taxon>Laurasiatheria</taxon>
        <taxon>Artiodactyla</taxon>
        <taxon>Ruminantia</taxon>
        <taxon>Pecora</taxon>
        <taxon>Bovidae</taxon>
        <taxon>Bovinae</taxon>
        <taxon>Bos</taxon>
    </lineage>
</organism>
<sequence length="64" mass="6954">MRLHHLLLALLFLVLSAWSGFTQGVGNPVSCVRNKGICVPIRCPGSMKQIGTCVGRAVKCCRKK</sequence>
<protein>
    <recommendedName>
        <fullName>Tracheal antimicrobial peptide</fullName>
        <shortName>TAP</shortName>
    </recommendedName>
</protein>
<accession>P25068</accession>
<accession>O97532</accession>
<name>TAP_BOVIN</name>
<evidence type="ECO:0000250" key="1"/>
<evidence type="ECO:0000269" key="2">
    <source>
    </source>
</evidence>
<evidence type="ECO:0000305" key="3"/>
<proteinExistence type="evidence at protein level"/>
<comment type="function">
    <text>Has antibacterial activity in vitro against Escherichia coli, Staphylococcus aureus, Klebsiella pneumonia, and Pseudomonas aeruginosa. In addition, the peptide is active against Candida albicans, indicating a broad spectrum of activity.</text>
</comment>
<comment type="subcellular location">
    <subcellularLocation>
        <location>Secreted</location>
    </subcellularLocation>
</comment>
<comment type="tissue specificity">
    <text>Tracheal epithelium.</text>
</comment>
<comment type="similarity">
    <text evidence="3">Belongs to the beta-defensin family. LAP/TAP subfamily.</text>
</comment>
<feature type="signal peptide" evidence="2">
    <location>
        <begin position="1"/>
        <end position="26"/>
    </location>
</feature>
<feature type="peptide" id="PRO_0000006966" description="Tracheal antimicrobial peptide">
    <location>
        <begin position="27"/>
        <end position="64"/>
    </location>
</feature>
<feature type="disulfide bond" evidence="1">
    <location>
        <begin position="31"/>
        <end position="60"/>
    </location>
</feature>
<feature type="disulfide bond" evidence="1">
    <location>
        <begin position="38"/>
        <end position="53"/>
    </location>
</feature>
<feature type="disulfide bond" evidence="1">
    <location>
        <begin position="43"/>
        <end position="61"/>
    </location>
</feature>
<feature type="sequence conflict" description="In Ref. 3; AAD01521." evidence="3" ref="3">
    <original>W</original>
    <variation>S</variation>
    <location>
        <position position="18"/>
    </location>
</feature>
<feature type="sequence conflict" description="In Ref. 3; AAD01521." evidence="3" ref="3">
    <original>S</original>
    <variation>N</variation>
    <location>
        <position position="46"/>
    </location>
</feature>
<keyword id="KW-0044">Antibiotic</keyword>
<keyword id="KW-0929">Antimicrobial</keyword>
<keyword id="KW-0211">Defensin</keyword>
<keyword id="KW-0903">Direct protein sequencing</keyword>
<keyword id="KW-1015">Disulfide bond</keyword>
<keyword id="KW-1185">Reference proteome</keyword>
<keyword id="KW-0964">Secreted</keyword>
<keyword id="KW-0732">Signal</keyword>
<reference key="1">
    <citation type="journal article" date="1991" name="Proc. Natl. Acad. Sci. U.S.A.">
        <title>Tracheal antimicrobial peptide, a cysteine-rich peptide from mammalian tracheal mucosa: peptide isolation and cloning of a cDNA.</title>
        <authorList>
            <person name="Diamond G."/>
            <person name="Zasloff M."/>
            <person name="Eck H."/>
            <person name="Brasseur M."/>
            <person name="Maloy W.L."/>
            <person name="Bevins C.L."/>
        </authorList>
    </citation>
    <scope>NUCLEOTIDE SEQUENCE [MRNA]</scope>
    <scope>PROTEIN SEQUENCE OF 27-59</scope>
    <source>
        <tissue>Tracheal epithelium</tissue>
    </source>
</reference>
<reference key="2">
    <citation type="journal article" date="1993" name="Proc. Natl. Acad. Sci. U.S.A.">
        <title>Airway epithelial cells are the site of expression of a mammalian antimicrobial peptide gene.</title>
        <authorList>
            <person name="Diamond G."/>
            <person name="Jones D.E."/>
            <person name="Bevins C.L."/>
        </authorList>
    </citation>
    <scope>NUCLEOTIDE SEQUENCE [GENOMIC DNA]</scope>
    <source>
        <tissue>Trachea</tissue>
    </source>
</reference>
<reference key="3">
    <citation type="submission" date="1997-07" db="EMBL/GenBank/DDBJ databases">
        <authorList>
            <person name="Ryan L.K."/>
            <person name="Rhodes J."/>
            <person name="Bhat M."/>
            <person name="Diamond G."/>
        </authorList>
    </citation>
    <scope>NUCLEOTIDE SEQUENCE [MRNA]</scope>
</reference>
<dbReference type="EMBL" id="M63023">
    <property type="protein sequence ID" value="AAB61757.1"/>
    <property type="molecule type" value="Genomic_DNA"/>
</dbReference>
<dbReference type="EMBL" id="L13373">
    <property type="protein sequence ID" value="AAA72363.1"/>
    <property type="molecule type" value="Genomic_DNA"/>
</dbReference>
<dbReference type="EMBL" id="AF014106">
    <property type="protein sequence ID" value="AAD01521.1"/>
    <property type="molecule type" value="mRNA"/>
</dbReference>
<dbReference type="PIR" id="A47438">
    <property type="entry name" value="A47438"/>
</dbReference>
<dbReference type="RefSeq" id="NP_777201.1">
    <property type="nucleotide sequence ID" value="NM_174776.1"/>
</dbReference>
<dbReference type="SMR" id="P25068"/>
<dbReference type="FunCoup" id="P25068">
    <property type="interactions" value="213"/>
</dbReference>
<dbReference type="STRING" id="9913.ENSBTAP00000056499"/>
<dbReference type="PaxDb" id="9913-ENSBTAP00000056499"/>
<dbReference type="Ensembl" id="ENSBTAT00000063757.3">
    <property type="protein sequence ID" value="ENSBTAP00000056499.1"/>
    <property type="gene ID" value="ENSBTAG00000048171.3"/>
</dbReference>
<dbReference type="GeneID" id="286837"/>
<dbReference type="KEGG" id="bta:286837"/>
<dbReference type="CTD" id="39935"/>
<dbReference type="VEuPathDB" id="HostDB:ENSBTAG00000048171"/>
<dbReference type="eggNOG" id="ENOG502SYUI">
    <property type="taxonomic scope" value="Eukaryota"/>
</dbReference>
<dbReference type="GeneTree" id="ENSGT00940000160995"/>
<dbReference type="HOGENOM" id="CLU_189296_4_1_1"/>
<dbReference type="InParanoid" id="P25068"/>
<dbReference type="OMA" id="LRRTKCC"/>
<dbReference type="OrthoDB" id="9623680at2759"/>
<dbReference type="Reactome" id="R-BTA-1461957">
    <property type="pathway name" value="Beta defensins"/>
</dbReference>
<dbReference type="Reactome" id="R-BTA-1461973">
    <property type="pathway name" value="Defensins"/>
</dbReference>
<dbReference type="Proteomes" id="UP000009136">
    <property type="component" value="Chromosome 27"/>
</dbReference>
<dbReference type="Bgee" id="ENSBTAG00000048171">
    <property type="expression patterns" value="Expressed in olfactory segment of nasal mucosa and 58 other cell types or tissues"/>
</dbReference>
<dbReference type="GO" id="GO:0005615">
    <property type="term" value="C:extracellular space"/>
    <property type="evidence" value="ECO:0000318"/>
    <property type="project" value="GO_Central"/>
</dbReference>
<dbReference type="GO" id="GO:0031731">
    <property type="term" value="F:CCR6 chemokine receptor binding"/>
    <property type="evidence" value="ECO:0000318"/>
    <property type="project" value="GO_Central"/>
</dbReference>
<dbReference type="GO" id="GO:0042056">
    <property type="term" value="F:chemoattractant activity"/>
    <property type="evidence" value="ECO:0000318"/>
    <property type="project" value="GO_Central"/>
</dbReference>
<dbReference type="GO" id="GO:0060326">
    <property type="term" value="P:cell chemotaxis"/>
    <property type="evidence" value="ECO:0000318"/>
    <property type="project" value="GO_Central"/>
</dbReference>
<dbReference type="GO" id="GO:0042742">
    <property type="term" value="P:defense response to bacterium"/>
    <property type="evidence" value="ECO:0000318"/>
    <property type="project" value="GO_Central"/>
</dbReference>
<dbReference type="FunFam" id="3.10.360.10:FF:000001">
    <property type="entry name" value="Beta-defensin 1"/>
    <property type="match status" value="1"/>
</dbReference>
<dbReference type="Gene3D" id="3.10.360.10">
    <property type="entry name" value="Antimicrobial Peptide, Beta-defensin 2, Chain A"/>
    <property type="match status" value="1"/>
</dbReference>
<dbReference type="InterPro" id="IPR006080">
    <property type="entry name" value="Beta/alpha-defensin_C"/>
</dbReference>
<dbReference type="InterPro" id="IPR001855">
    <property type="entry name" value="Defensin_beta-like"/>
</dbReference>
<dbReference type="PANTHER" id="PTHR20515">
    <property type="entry name" value="BETA-DEFENSIN"/>
    <property type="match status" value="1"/>
</dbReference>
<dbReference type="PANTHER" id="PTHR20515:SF2">
    <property type="entry name" value="DEFENSIN BETA 4A"/>
    <property type="match status" value="1"/>
</dbReference>
<dbReference type="Pfam" id="PF00711">
    <property type="entry name" value="Defensin_beta"/>
    <property type="match status" value="1"/>
</dbReference>
<dbReference type="SMART" id="SM00048">
    <property type="entry name" value="DEFSN"/>
    <property type="match status" value="1"/>
</dbReference>
<dbReference type="SUPFAM" id="SSF57392">
    <property type="entry name" value="Defensin-like"/>
    <property type="match status" value="1"/>
</dbReference>